<gene>
    <name type="primary">dgkA</name>
    <name type="ordered locus">SF4163</name>
    <name type="ordered locus">S3568</name>
</gene>
<feature type="initiator methionine" description="Removed" evidence="1">
    <location>
        <position position="1"/>
    </location>
</feature>
<feature type="chain" id="PRO_0000195268" description="Diacylglycerol kinase">
    <location>
        <begin position="2"/>
        <end position="122"/>
    </location>
</feature>
<feature type="transmembrane region" description="Helical" evidence="3">
    <location>
        <begin position="35"/>
        <end position="55"/>
    </location>
</feature>
<feature type="transmembrane region" description="Helical" evidence="3">
    <location>
        <begin position="57"/>
        <end position="77"/>
    </location>
</feature>
<feature type="transmembrane region" description="Helical" evidence="3">
    <location>
        <begin position="98"/>
        <end position="118"/>
    </location>
</feature>
<feature type="active site" description="Proton acceptor" evidence="2">
    <location>
        <position position="70"/>
    </location>
</feature>
<feature type="binding site" evidence="2">
    <location>
        <position position="10"/>
    </location>
    <ligand>
        <name>ATP</name>
        <dbReference type="ChEBI" id="CHEBI:30616"/>
    </ligand>
</feature>
<feature type="binding site" evidence="2">
    <location>
        <position position="10"/>
    </location>
    <ligand>
        <name>substrate</name>
    </ligand>
</feature>
<feature type="binding site" evidence="2">
    <location>
        <begin position="14"/>
        <end position="19"/>
    </location>
    <ligand>
        <name>substrate</name>
    </ligand>
</feature>
<feature type="binding site" evidence="2">
    <location>
        <position position="17"/>
    </location>
    <ligand>
        <name>ATP</name>
        <dbReference type="ChEBI" id="CHEBI:30616"/>
    </ligand>
</feature>
<feature type="binding site" evidence="2">
    <location>
        <begin position="23"/>
        <end position="26"/>
    </location>
    <ligand>
        <name>substrate</name>
    </ligand>
</feature>
<feature type="binding site" evidence="2">
    <location>
        <position position="29"/>
    </location>
    <ligand>
        <name>a divalent metal cation</name>
        <dbReference type="ChEBI" id="CHEBI:60240"/>
    </ligand>
</feature>
<feature type="binding site" evidence="2">
    <location>
        <position position="29"/>
    </location>
    <ligand>
        <name>ATP</name>
        <dbReference type="ChEBI" id="CHEBI:30616"/>
    </ligand>
</feature>
<feature type="binding site" evidence="2">
    <location>
        <begin position="31"/>
        <end position="35"/>
    </location>
    <ligand>
        <name>substrate</name>
    </ligand>
</feature>
<feature type="binding site" evidence="2">
    <location>
        <begin position="48"/>
        <end position="51"/>
    </location>
    <ligand>
        <name>substrate</name>
    </ligand>
</feature>
<feature type="binding site" evidence="2">
    <location>
        <position position="56"/>
    </location>
    <ligand>
        <name>substrate</name>
    </ligand>
</feature>
<feature type="binding site" evidence="2">
    <location>
        <position position="70"/>
    </location>
    <ligand>
        <name>substrate</name>
    </ligand>
</feature>
<feature type="binding site" evidence="2">
    <location>
        <position position="77"/>
    </location>
    <ligand>
        <name>a divalent metal cation</name>
        <dbReference type="ChEBI" id="CHEBI:60240"/>
    </ligand>
</feature>
<feature type="binding site" evidence="2">
    <location>
        <position position="77"/>
    </location>
    <ligand>
        <name>ATP</name>
        <dbReference type="ChEBI" id="CHEBI:30616"/>
    </ligand>
</feature>
<feature type="binding site" evidence="2">
    <location>
        <begin position="86"/>
        <end position="88"/>
    </location>
    <ligand>
        <name>ATP</name>
        <dbReference type="ChEBI" id="CHEBI:30616"/>
    </ligand>
</feature>
<feature type="binding site" evidence="2">
    <location>
        <begin position="95"/>
        <end position="96"/>
    </location>
    <ligand>
        <name>ATP</name>
        <dbReference type="ChEBI" id="CHEBI:30616"/>
    </ligand>
</feature>
<feature type="binding site" evidence="2">
    <location>
        <position position="99"/>
    </location>
    <ligand>
        <name>substrate</name>
    </ligand>
</feature>
<feature type="binding site" evidence="2">
    <location>
        <begin position="113"/>
        <end position="118"/>
    </location>
    <ligand>
        <name>substrate</name>
    </ligand>
</feature>
<dbReference type="EC" id="2.7.1.107" evidence="2"/>
<dbReference type="EMBL" id="AE005674">
    <property type="protein sequence ID" value="AAN45585.1"/>
    <property type="molecule type" value="Genomic_DNA"/>
</dbReference>
<dbReference type="EMBL" id="AE014073">
    <property type="protein sequence ID" value="AAP18614.1"/>
    <property type="molecule type" value="Genomic_DNA"/>
</dbReference>
<dbReference type="RefSeq" id="NP_709878.1">
    <property type="nucleotide sequence ID" value="NC_004337.2"/>
</dbReference>
<dbReference type="RefSeq" id="WP_000002907.1">
    <property type="nucleotide sequence ID" value="NZ_WPGW01000150.1"/>
</dbReference>
<dbReference type="BMRB" id="P0ABN4"/>
<dbReference type="SMR" id="P0ABN4"/>
<dbReference type="STRING" id="198214.SF4163"/>
<dbReference type="PaxDb" id="198214-SF4163"/>
<dbReference type="GeneID" id="1023428"/>
<dbReference type="GeneID" id="93777789"/>
<dbReference type="KEGG" id="sfl:SF4163"/>
<dbReference type="KEGG" id="sfx:S3568"/>
<dbReference type="PATRIC" id="fig|198214.7.peg.4911"/>
<dbReference type="HOGENOM" id="CLU_112343_3_1_6"/>
<dbReference type="Proteomes" id="UP000001006">
    <property type="component" value="Chromosome"/>
</dbReference>
<dbReference type="Proteomes" id="UP000002673">
    <property type="component" value="Chromosome"/>
</dbReference>
<dbReference type="GO" id="GO:0005886">
    <property type="term" value="C:plasma membrane"/>
    <property type="evidence" value="ECO:0007669"/>
    <property type="project" value="UniProtKB-SubCell"/>
</dbReference>
<dbReference type="GO" id="GO:0005524">
    <property type="term" value="F:ATP binding"/>
    <property type="evidence" value="ECO:0007669"/>
    <property type="project" value="UniProtKB-KW"/>
</dbReference>
<dbReference type="GO" id="GO:0004143">
    <property type="term" value="F:ATP-dependent diacylglycerol kinase activity"/>
    <property type="evidence" value="ECO:0007669"/>
    <property type="project" value="UniProtKB-EC"/>
</dbReference>
<dbReference type="GO" id="GO:0046872">
    <property type="term" value="F:metal ion binding"/>
    <property type="evidence" value="ECO:0007669"/>
    <property type="project" value="UniProtKB-KW"/>
</dbReference>
<dbReference type="GO" id="GO:0006654">
    <property type="term" value="P:phosphatidic acid biosynthetic process"/>
    <property type="evidence" value="ECO:0007669"/>
    <property type="project" value="InterPro"/>
</dbReference>
<dbReference type="CDD" id="cd14264">
    <property type="entry name" value="DAGK_IM"/>
    <property type="match status" value="1"/>
</dbReference>
<dbReference type="FunFam" id="1.10.287.3610:FF:000001">
    <property type="entry name" value="Diacylglycerol kinase"/>
    <property type="match status" value="1"/>
</dbReference>
<dbReference type="Gene3D" id="1.10.287.3610">
    <property type="match status" value="1"/>
</dbReference>
<dbReference type="InterPro" id="IPR000829">
    <property type="entry name" value="DAGK"/>
</dbReference>
<dbReference type="InterPro" id="IPR033718">
    <property type="entry name" value="DAGK_prok"/>
</dbReference>
<dbReference type="InterPro" id="IPR036945">
    <property type="entry name" value="DAGK_sf"/>
</dbReference>
<dbReference type="PANTHER" id="PTHR34299">
    <property type="entry name" value="DIACYLGLYCEROL KINASE"/>
    <property type="match status" value="1"/>
</dbReference>
<dbReference type="PANTHER" id="PTHR34299:SF1">
    <property type="entry name" value="DIACYLGLYCEROL KINASE"/>
    <property type="match status" value="1"/>
</dbReference>
<dbReference type="Pfam" id="PF01219">
    <property type="entry name" value="DAGK_prokar"/>
    <property type="match status" value="1"/>
</dbReference>
<dbReference type="PROSITE" id="PS01069">
    <property type="entry name" value="DAGK_PROKAR"/>
    <property type="match status" value="1"/>
</dbReference>
<comment type="function">
    <text evidence="2">Catalyzes the ATP-dependent phosphorylation of sn-l,2-diacylglycerol (DAG) to phosphatidic acid. Involved in the recycling of diacylglycerol produced as a by-product during membrane-derived oligosaccharide (MDO) biosynthesis.</text>
</comment>
<comment type="catalytic activity">
    <reaction evidence="2">
        <text>a 1,2-diacyl-sn-glycerol + ATP = a 1,2-diacyl-sn-glycero-3-phosphate + ADP + H(+)</text>
        <dbReference type="Rhea" id="RHEA:10272"/>
        <dbReference type="ChEBI" id="CHEBI:15378"/>
        <dbReference type="ChEBI" id="CHEBI:17815"/>
        <dbReference type="ChEBI" id="CHEBI:30616"/>
        <dbReference type="ChEBI" id="CHEBI:58608"/>
        <dbReference type="ChEBI" id="CHEBI:456216"/>
        <dbReference type="EC" id="2.7.1.107"/>
    </reaction>
</comment>
<comment type="cofactor">
    <cofactor evidence="2">
        <name>Mg(2+)</name>
        <dbReference type="ChEBI" id="CHEBI:18420"/>
    </cofactor>
</comment>
<comment type="subcellular location">
    <subcellularLocation>
        <location evidence="2">Cell inner membrane</location>
        <topology evidence="2">Multi-pass membrane protein</topology>
    </subcellularLocation>
</comment>
<comment type="similarity">
    <text evidence="4">Belongs to the bacterial diacylglycerol kinase family.</text>
</comment>
<proteinExistence type="inferred from homology"/>
<evidence type="ECO:0000250" key="1"/>
<evidence type="ECO:0000250" key="2">
    <source>
        <dbReference type="UniProtKB" id="P0ABN1"/>
    </source>
</evidence>
<evidence type="ECO:0000255" key="3"/>
<evidence type="ECO:0000305" key="4"/>
<reference key="1">
    <citation type="journal article" date="2002" name="Nucleic Acids Res.">
        <title>Genome sequence of Shigella flexneri 2a: insights into pathogenicity through comparison with genomes of Escherichia coli K12 and O157.</title>
        <authorList>
            <person name="Jin Q."/>
            <person name="Yuan Z."/>
            <person name="Xu J."/>
            <person name="Wang Y."/>
            <person name="Shen Y."/>
            <person name="Lu W."/>
            <person name="Wang J."/>
            <person name="Liu H."/>
            <person name="Yang J."/>
            <person name="Yang F."/>
            <person name="Zhang X."/>
            <person name="Zhang J."/>
            <person name="Yang G."/>
            <person name="Wu H."/>
            <person name="Qu D."/>
            <person name="Dong J."/>
            <person name="Sun L."/>
            <person name="Xue Y."/>
            <person name="Zhao A."/>
            <person name="Gao Y."/>
            <person name="Zhu J."/>
            <person name="Kan B."/>
            <person name="Ding K."/>
            <person name="Chen S."/>
            <person name="Cheng H."/>
            <person name="Yao Z."/>
            <person name="He B."/>
            <person name="Chen R."/>
            <person name="Ma D."/>
            <person name="Qiang B."/>
            <person name="Wen Y."/>
            <person name="Hou Y."/>
            <person name="Yu J."/>
        </authorList>
    </citation>
    <scope>NUCLEOTIDE SEQUENCE [LARGE SCALE GENOMIC DNA]</scope>
    <source>
        <strain>301 / Serotype 2a</strain>
    </source>
</reference>
<reference key="2">
    <citation type="journal article" date="2003" name="Infect. Immun.">
        <title>Complete genome sequence and comparative genomics of Shigella flexneri serotype 2a strain 2457T.</title>
        <authorList>
            <person name="Wei J."/>
            <person name="Goldberg M.B."/>
            <person name="Burland V."/>
            <person name="Venkatesan M.M."/>
            <person name="Deng W."/>
            <person name="Fournier G."/>
            <person name="Mayhew G.F."/>
            <person name="Plunkett G. III"/>
            <person name="Rose D.J."/>
            <person name="Darling A."/>
            <person name="Mau B."/>
            <person name="Perna N.T."/>
            <person name="Payne S.M."/>
            <person name="Runyen-Janecky L.J."/>
            <person name="Zhou S."/>
            <person name="Schwartz D.C."/>
            <person name="Blattner F.R."/>
        </authorList>
    </citation>
    <scope>NUCLEOTIDE SEQUENCE [LARGE SCALE GENOMIC DNA]</scope>
    <source>
        <strain>ATCC 700930 / 2457T / Serotype 2a</strain>
    </source>
</reference>
<accession>P0ABN4</accession>
<accession>P00556</accession>
<sequence length="122" mass="13245">MANNTTGFTRIIKAAGYSWKGLRAAWINEAAFRQEGVAVLLAVVIACWLDVDAITRVLLISSVMLVMIVEILNSAIEAVVDRIGSEYHELSGRAKDMGSAAVLIAIIVAVITWCILLWSHFG</sequence>
<organism>
    <name type="scientific">Shigella flexneri</name>
    <dbReference type="NCBI Taxonomy" id="623"/>
    <lineage>
        <taxon>Bacteria</taxon>
        <taxon>Pseudomonadati</taxon>
        <taxon>Pseudomonadota</taxon>
        <taxon>Gammaproteobacteria</taxon>
        <taxon>Enterobacterales</taxon>
        <taxon>Enterobacteriaceae</taxon>
        <taxon>Shigella</taxon>
    </lineage>
</organism>
<protein>
    <recommendedName>
        <fullName evidence="2">Diacylglycerol kinase</fullName>
        <shortName evidence="2">DAGK</shortName>
        <ecNumber evidence="2">2.7.1.107</ecNumber>
    </recommendedName>
    <alternativeName>
        <fullName evidence="2">Diglyceride kinase</fullName>
        <shortName evidence="2">DGK</shortName>
    </alternativeName>
</protein>
<keyword id="KW-0067">ATP-binding</keyword>
<keyword id="KW-0997">Cell inner membrane</keyword>
<keyword id="KW-1003">Cell membrane</keyword>
<keyword id="KW-0418">Kinase</keyword>
<keyword id="KW-0444">Lipid biosynthesis</keyword>
<keyword id="KW-0443">Lipid metabolism</keyword>
<keyword id="KW-0460">Magnesium</keyword>
<keyword id="KW-0472">Membrane</keyword>
<keyword id="KW-0479">Metal-binding</keyword>
<keyword id="KW-0547">Nucleotide-binding</keyword>
<keyword id="KW-0594">Phospholipid biosynthesis</keyword>
<keyword id="KW-1208">Phospholipid metabolism</keyword>
<keyword id="KW-1185">Reference proteome</keyword>
<keyword id="KW-0808">Transferase</keyword>
<keyword id="KW-0812">Transmembrane</keyword>
<keyword id="KW-1133">Transmembrane helix</keyword>
<name>KDGL_SHIFL</name>